<name>CH10_CLOB8</name>
<protein>
    <recommendedName>
        <fullName evidence="1">Co-chaperonin GroES</fullName>
    </recommendedName>
    <alternativeName>
        <fullName evidence="1">10 kDa chaperonin</fullName>
    </alternativeName>
    <alternativeName>
        <fullName evidence="1">Chaperonin-10</fullName>
        <shortName evidence="1">Cpn10</shortName>
    </alternativeName>
</protein>
<comment type="function">
    <text evidence="1">Together with the chaperonin GroEL, plays an essential role in assisting protein folding. The GroEL-GroES system forms a nano-cage that allows encapsulation of the non-native substrate proteins and provides a physical environment optimized to promote and accelerate protein folding. GroES binds to the apical surface of the GroEL ring, thereby capping the opening of the GroEL channel.</text>
</comment>
<comment type="subunit">
    <text evidence="1">Heptamer of 7 subunits arranged in a ring. Interacts with the chaperonin GroEL.</text>
</comment>
<comment type="subcellular location">
    <subcellularLocation>
        <location evidence="1">Cytoplasm</location>
    </subcellularLocation>
</comment>
<comment type="similarity">
    <text evidence="1">Belongs to the GroES chaperonin family.</text>
</comment>
<reference key="1">
    <citation type="submission" date="2007-06" db="EMBL/GenBank/DDBJ databases">
        <title>Complete sequence of Clostridium beijerinckii NCIMB 8052.</title>
        <authorList>
            <consortium name="US DOE Joint Genome Institute"/>
            <person name="Copeland A."/>
            <person name="Lucas S."/>
            <person name="Lapidus A."/>
            <person name="Barry K."/>
            <person name="Detter J.C."/>
            <person name="Glavina del Rio T."/>
            <person name="Hammon N."/>
            <person name="Israni S."/>
            <person name="Dalin E."/>
            <person name="Tice H."/>
            <person name="Pitluck S."/>
            <person name="Sims D."/>
            <person name="Brettin T."/>
            <person name="Bruce D."/>
            <person name="Tapia R."/>
            <person name="Brainard J."/>
            <person name="Schmutz J."/>
            <person name="Larimer F."/>
            <person name="Land M."/>
            <person name="Hauser L."/>
            <person name="Kyrpides N."/>
            <person name="Mikhailova N."/>
            <person name="Bennet G."/>
            <person name="Cann I."/>
            <person name="Chen J.-S."/>
            <person name="Contreras A.L."/>
            <person name="Jones D."/>
            <person name="Kashket E."/>
            <person name="Mitchell W."/>
            <person name="Stoddard S."/>
            <person name="Schwarz W."/>
            <person name="Qureshi N."/>
            <person name="Young M."/>
            <person name="Shi Z."/>
            <person name="Ezeji T."/>
            <person name="White B."/>
            <person name="Blaschek H."/>
            <person name="Richardson P."/>
        </authorList>
    </citation>
    <scope>NUCLEOTIDE SEQUENCE [LARGE SCALE GENOMIC DNA]</scope>
    <source>
        <strain>ATCC 51743 / NCIMB 8052</strain>
    </source>
</reference>
<evidence type="ECO:0000255" key="1">
    <source>
        <dbReference type="HAMAP-Rule" id="MF_00580"/>
    </source>
</evidence>
<feature type="chain" id="PRO_1000082369" description="Co-chaperonin GroES">
    <location>
        <begin position="1"/>
        <end position="94"/>
    </location>
</feature>
<dbReference type="EMBL" id="CP000721">
    <property type="protein sequence ID" value="ABR32516.1"/>
    <property type="molecule type" value="Genomic_DNA"/>
</dbReference>
<dbReference type="RefSeq" id="WP_008427174.1">
    <property type="nucleotide sequence ID" value="NC_009617.1"/>
</dbReference>
<dbReference type="SMR" id="A6LQ86"/>
<dbReference type="GeneID" id="66343205"/>
<dbReference type="KEGG" id="cbe:Cbei_0328"/>
<dbReference type="eggNOG" id="COG0234">
    <property type="taxonomic scope" value="Bacteria"/>
</dbReference>
<dbReference type="HOGENOM" id="CLU_132825_2_0_9"/>
<dbReference type="Proteomes" id="UP000000565">
    <property type="component" value="Chromosome"/>
</dbReference>
<dbReference type="GO" id="GO:0005737">
    <property type="term" value="C:cytoplasm"/>
    <property type="evidence" value="ECO:0007669"/>
    <property type="project" value="UniProtKB-SubCell"/>
</dbReference>
<dbReference type="GO" id="GO:0005524">
    <property type="term" value="F:ATP binding"/>
    <property type="evidence" value="ECO:0007669"/>
    <property type="project" value="InterPro"/>
</dbReference>
<dbReference type="GO" id="GO:0046872">
    <property type="term" value="F:metal ion binding"/>
    <property type="evidence" value="ECO:0007669"/>
    <property type="project" value="TreeGrafter"/>
</dbReference>
<dbReference type="GO" id="GO:0044183">
    <property type="term" value="F:protein folding chaperone"/>
    <property type="evidence" value="ECO:0007669"/>
    <property type="project" value="InterPro"/>
</dbReference>
<dbReference type="GO" id="GO:0051087">
    <property type="term" value="F:protein-folding chaperone binding"/>
    <property type="evidence" value="ECO:0007669"/>
    <property type="project" value="TreeGrafter"/>
</dbReference>
<dbReference type="GO" id="GO:0051082">
    <property type="term" value="F:unfolded protein binding"/>
    <property type="evidence" value="ECO:0007669"/>
    <property type="project" value="TreeGrafter"/>
</dbReference>
<dbReference type="GO" id="GO:0051085">
    <property type="term" value="P:chaperone cofactor-dependent protein refolding"/>
    <property type="evidence" value="ECO:0007669"/>
    <property type="project" value="TreeGrafter"/>
</dbReference>
<dbReference type="CDD" id="cd00320">
    <property type="entry name" value="cpn10"/>
    <property type="match status" value="1"/>
</dbReference>
<dbReference type="FunFam" id="2.30.33.40:FF:000001">
    <property type="entry name" value="10 kDa chaperonin"/>
    <property type="match status" value="1"/>
</dbReference>
<dbReference type="Gene3D" id="2.30.33.40">
    <property type="entry name" value="GroES chaperonin"/>
    <property type="match status" value="1"/>
</dbReference>
<dbReference type="HAMAP" id="MF_00580">
    <property type="entry name" value="CH10"/>
    <property type="match status" value="1"/>
</dbReference>
<dbReference type="InterPro" id="IPR020818">
    <property type="entry name" value="Chaperonin_GroES"/>
</dbReference>
<dbReference type="InterPro" id="IPR037124">
    <property type="entry name" value="Chaperonin_GroES_sf"/>
</dbReference>
<dbReference type="InterPro" id="IPR018369">
    <property type="entry name" value="Chaprnonin_Cpn10_CS"/>
</dbReference>
<dbReference type="InterPro" id="IPR011032">
    <property type="entry name" value="GroES-like_sf"/>
</dbReference>
<dbReference type="NCBIfam" id="NF001530">
    <property type="entry name" value="PRK00364.1-6"/>
    <property type="match status" value="1"/>
</dbReference>
<dbReference type="NCBIfam" id="NF001531">
    <property type="entry name" value="PRK00364.2-2"/>
    <property type="match status" value="1"/>
</dbReference>
<dbReference type="NCBIfam" id="NF001533">
    <property type="entry name" value="PRK00364.2-4"/>
    <property type="match status" value="1"/>
</dbReference>
<dbReference type="NCBIfam" id="NF001534">
    <property type="entry name" value="PRK00364.2-5"/>
    <property type="match status" value="1"/>
</dbReference>
<dbReference type="PANTHER" id="PTHR10772">
    <property type="entry name" value="10 KDA HEAT SHOCK PROTEIN"/>
    <property type="match status" value="1"/>
</dbReference>
<dbReference type="PANTHER" id="PTHR10772:SF58">
    <property type="entry name" value="CO-CHAPERONIN GROES"/>
    <property type="match status" value="1"/>
</dbReference>
<dbReference type="Pfam" id="PF00166">
    <property type="entry name" value="Cpn10"/>
    <property type="match status" value="1"/>
</dbReference>
<dbReference type="PRINTS" id="PR00297">
    <property type="entry name" value="CHAPERONIN10"/>
</dbReference>
<dbReference type="SMART" id="SM00883">
    <property type="entry name" value="Cpn10"/>
    <property type="match status" value="1"/>
</dbReference>
<dbReference type="SUPFAM" id="SSF50129">
    <property type="entry name" value="GroES-like"/>
    <property type="match status" value="1"/>
</dbReference>
<dbReference type="PROSITE" id="PS00681">
    <property type="entry name" value="CHAPERONINS_CPN10"/>
    <property type="match status" value="1"/>
</dbReference>
<accession>A6LQ86</accession>
<keyword id="KW-0143">Chaperone</keyword>
<keyword id="KW-0963">Cytoplasm</keyword>
<gene>
    <name evidence="1" type="primary">groES</name>
    <name evidence="1" type="synonym">groS</name>
    <name type="ordered locus">Cbei_0328</name>
</gene>
<proteinExistence type="inferred from homology"/>
<sequence>MNIKPLGERVVIKKLEAEEKTKSGIVLTGTAKERPQEAEVVAVGPGAVVDGNRVAMEVKVGDKVLYSKYAGTEVKVDGEEYTILKQDDILAIVE</sequence>
<organism>
    <name type="scientific">Clostridium beijerinckii (strain ATCC 51743 / NCIMB 8052)</name>
    <name type="common">Clostridium acetobutylicum</name>
    <dbReference type="NCBI Taxonomy" id="290402"/>
    <lineage>
        <taxon>Bacteria</taxon>
        <taxon>Bacillati</taxon>
        <taxon>Bacillota</taxon>
        <taxon>Clostridia</taxon>
        <taxon>Eubacteriales</taxon>
        <taxon>Clostridiaceae</taxon>
        <taxon>Clostridium</taxon>
    </lineage>
</organism>